<name>SP5AD_BACSU</name>
<reference key="1">
    <citation type="journal article" date="1985" name="J. Gen. Microbiol.">
        <title>Nucleotide sequence and complementation analysis of a polycistronic sporulation operon, spoVA, in Bacillus subtilis.</title>
        <authorList>
            <person name="Fort P."/>
            <person name="Errington J."/>
        </authorList>
    </citation>
    <scope>NUCLEOTIDE SEQUENCE [GENOMIC DNA]</scope>
</reference>
<reference key="2">
    <citation type="journal article" date="1996" name="Microbiology">
        <title>Systematic sequencing of the 283 kb 210 degrees-232 degrees region of the Bacillus subtilis genome containing the skin element and many sporulation genes.</title>
        <authorList>
            <person name="Mizuno M."/>
            <person name="Masuda S."/>
            <person name="Takemaru K."/>
            <person name="Hosono S."/>
            <person name="Sato T."/>
            <person name="Takeuchi M."/>
            <person name="Kobayashi Y."/>
        </authorList>
    </citation>
    <scope>NUCLEOTIDE SEQUENCE [GENOMIC DNA]</scope>
    <source>
        <strain>168 / JH642</strain>
    </source>
</reference>
<reference key="3">
    <citation type="journal article" date="1997" name="Nature">
        <title>The complete genome sequence of the Gram-positive bacterium Bacillus subtilis.</title>
        <authorList>
            <person name="Kunst F."/>
            <person name="Ogasawara N."/>
            <person name="Moszer I."/>
            <person name="Albertini A.M."/>
            <person name="Alloni G."/>
            <person name="Azevedo V."/>
            <person name="Bertero M.G."/>
            <person name="Bessieres P."/>
            <person name="Bolotin A."/>
            <person name="Borchert S."/>
            <person name="Borriss R."/>
            <person name="Boursier L."/>
            <person name="Brans A."/>
            <person name="Braun M."/>
            <person name="Brignell S.C."/>
            <person name="Bron S."/>
            <person name="Brouillet S."/>
            <person name="Bruschi C.V."/>
            <person name="Caldwell B."/>
            <person name="Capuano V."/>
            <person name="Carter N.M."/>
            <person name="Choi S.-K."/>
            <person name="Codani J.-J."/>
            <person name="Connerton I.F."/>
            <person name="Cummings N.J."/>
            <person name="Daniel R.A."/>
            <person name="Denizot F."/>
            <person name="Devine K.M."/>
            <person name="Duesterhoeft A."/>
            <person name="Ehrlich S.D."/>
            <person name="Emmerson P.T."/>
            <person name="Entian K.-D."/>
            <person name="Errington J."/>
            <person name="Fabret C."/>
            <person name="Ferrari E."/>
            <person name="Foulger D."/>
            <person name="Fritz C."/>
            <person name="Fujita M."/>
            <person name="Fujita Y."/>
            <person name="Fuma S."/>
            <person name="Galizzi A."/>
            <person name="Galleron N."/>
            <person name="Ghim S.-Y."/>
            <person name="Glaser P."/>
            <person name="Goffeau A."/>
            <person name="Golightly E.J."/>
            <person name="Grandi G."/>
            <person name="Guiseppi G."/>
            <person name="Guy B.J."/>
            <person name="Haga K."/>
            <person name="Haiech J."/>
            <person name="Harwood C.R."/>
            <person name="Henaut A."/>
            <person name="Hilbert H."/>
            <person name="Holsappel S."/>
            <person name="Hosono S."/>
            <person name="Hullo M.-F."/>
            <person name="Itaya M."/>
            <person name="Jones L.-M."/>
            <person name="Joris B."/>
            <person name="Karamata D."/>
            <person name="Kasahara Y."/>
            <person name="Klaerr-Blanchard M."/>
            <person name="Klein C."/>
            <person name="Kobayashi Y."/>
            <person name="Koetter P."/>
            <person name="Koningstein G."/>
            <person name="Krogh S."/>
            <person name="Kumano M."/>
            <person name="Kurita K."/>
            <person name="Lapidus A."/>
            <person name="Lardinois S."/>
            <person name="Lauber J."/>
            <person name="Lazarevic V."/>
            <person name="Lee S.-M."/>
            <person name="Levine A."/>
            <person name="Liu H."/>
            <person name="Masuda S."/>
            <person name="Mauel C."/>
            <person name="Medigue C."/>
            <person name="Medina N."/>
            <person name="Mellado R.P."/>
            <person name="Mizuno M."/>
            <person name="Moestl D."/>
            <person name="Nakai S."/>
            <person name="Noback M."/>
            <person name="Noone D."/>
            <person name="O'Reilly M."/>
            <person name="Ogawa K."/>
            <person name="Ogiwara A."/>
            <person name="Oudega B."/>
            <person name="Park S.-H."/>
            <person name="Parro V."/>
            <person name="Pohl T.M."/>
            <person name="Portetelle D."/>
            <person name="Porwollik S."/>
            <person name="Prescott A.M."/>
            <person name="Presecan E."/>
            <person name="Pujic P."/>
            <person name="Purnelle B."/>
            <person name="Rapoport G."/>
            <person name="Rey M."/>
            <person name="Reynolds S."/>
            <person name="Rieger M."/>
            <person name="Rivolta C."/>
            <person name="Rocha E."/>
            <person name="Roche B."/>
            <person name="Rose M."/>
            <person name="Sadaie Y."/>
            <person name="Sato T."/>
            <person name="Scanlan E."/>
            <person name="Schleich S."/>
            <person name="Schroeter R."/>
            <person name="Scoffone F."/>
            <person name="Sekiguchi J."/>
            <person name="Sekowska A."/>
            <person name="Seror S.J."/>
            <person name="Serror P."/>
            <person name="Shin B.-S."/>
            <person name="Soldo B."/>
            <person name="Sorokin A."/>
            <person name="Tacconi E."/>
            <person name="Takagi T."/>
            <person name="Takahashi H."/>
            <person name="Takemaru K."/>
            <person name="Takeuchi M."/>
            <person name="Tamakoshi A."/>
            <person name="Tanaka T."/>
            <person name="Terpstra P."/>
            <person name="Tognoni A."/>
            <person name="Tosato V."/>
            <person name="Uchiyama S."/>
            <person name="Vandenbol M."/>
            <person name="Vannier F."/>
            <person name="Vassarotti A."/>
            <person name="Viari A."/>
            <person name="Wambutt R."/>
            <person name="Wedler E."/>
            <person name="Wedler H."/>
            <person name="Weitzenegger T."/>
            <person name="Winters P."/>
            <person name="Wipat A."/>
            <person name="Yamamoto H."/>
            <person name="Yamane K."/>
            <person name="Yasumoto K."/>
            <person name="Yata K."/>
            <person name="Yoshida K."/>
            <person name="Yoshikawa H.-F."/>
            <person name="Zumstein E."/>
            <person name="Yoshikawa H."/>
            <person name="Danchin A."/>
        </authorList>
    </citation>
    <scope>NUCLEOTIDE SEQUENCE [LARGE SCALE GENOMIC DNA]</scope>
    <source>
        <strain>168</strain>
    </source>
</reference>
<organism>
    <name type="scientific">Bacillus subtilis (strain 168)</name>
    <dbReference type="NCBI Taxonomy" id="224308"/>
    <lineage>
        <taxon>Bacteria</taxon>
        <taxon>Bacillati</taxon>
        <taxon>Bacillota</taxon>
        <taxon>Bacilli</taxon>
        <taxon>Bacillales</taxon>
        <taxon>Bacillaceae</taxon>
        <taxon>Bacillus</taxon>
    </lineage>
</organism>
<keyword id="KW-0002">3D-structure</keyword>
<keyword id="KW-1185">Reference proteome</keyword>
<keyword id="KW-0749">Sporulation</keyword>
<evidence type="ECO:0007829" key="1">
    <source>
        <dbReference type="PDB" id="3LM6"/>
    </source>
</evidence>
<dbReference type="EMBL" id="M15349">
    <property type="status" value="NOT_ANNOTATED_CDS"/>
    <property type="molecule type" value="Genomic_DNA"/>
</dbReference>
<dbReference type="EMBL" id="D84432">
    <property type="protein sequence ID" value="BAA12659.1"/>
    <property type="molecule type" value="Genomic_DNA"/>
</dbReference>
<dbReference type="EMBL" id="AL009126">
    <property type="protein sequence ID" value="CAB14273.1"/>
    <property type="molecule type" value="Genomic_DNA"/>
</dbReference>
<dbReference type="PIR" id="G69714">
    <property type="entry name" value="G69714"/>
</dbReference>
<dbReference type="RefSeq" id="NP_390222.1">
    <property type="nucleotide sequence ID" value="NC_000964.3"/>
</dbReference>
<dbReference type="RefSeq" id="WP_003230465.1">
    <property type="nucleotide sequence ID" value="NZ_OZ025638.1"/>
</dbReference>
<dbReference type="PDB" id="3LM6">
    <property type="method" value="X-ray"/>
    <property type="resolution" value="2.50 A"/>
    <property type="chains" value="A/B=1-338"/>
</dbReference>
<dbReference type="PDBsum" id="3LM6"/>
<dbReference type="SMR" id="P40869"/>
<dbReference type="FunCoup" id="P40869">
    <property type="interactions" value="72"/>
</dbReference>
<dbReference type="STRING" id="224308.BSU23410"/>
<dbReference type="TCDB" id="9.A.11.1.1">
    <property type="family name" value="the dipicolinic acid transporter (dpa-t) family"/>
</dbReference>
<dbReference type="PaxDb" id="224308-BSU23410"/>
<dbReference type="DNASU" id="938932"/>
<dbReference type="EnsemblBacteria" id="CAB14273">
    <property type="protein sequence ID" value="CAB14273"/>
    <property type="gene ID" value="BSU_23410"/>
</dbReference>
<dbReference type="GeneID" id="938932"/>
<dbReference type="KEGG" id="bsu:BSU23410"/>
<dbReference type="PATRIC" id="fig|224308.179.peg.2551"/>
<dbReference type="eggNOG" id="COG0332">
    <property type="taxonomic scope" value="Bacteria"/>
</dbReference>
<dbReference type="InParanoid" id="P40869"/>
<dbReference type="OrthoDB" id="9770068at2"/>
<dbReference type="PhylomeDB" id="P40869"/>
<dbReference type="BioCyc" id="BSUB:BSU23410-MONOMER"/>
<dbReference type="EvolutionaryTrace" id="P40869"/>
<dbReference type="Proteomes" id="UP000001570">
    <property type="component" value="Chromosome"/>
</dbReference>
<dbReference type="GO" id="GO:0005886">
    <property type="term" value="C:plasma membrane"/>
    <property type="evidence" value="ECO:0000314"/>
    <property type="project" value="CACAO"/>
</dbReference>
<dbReference type="GO" id="GO:0031160">
    <property type="term" value="C:spore wall"/>
    <property type="evidence" value="ECO:0000314"/>
    <property type="project" value="CACAO"/>
</dbReference>
<dbReference type="GO" id="GO:0016746">
    <property type="term" value="F:acyltransferase activity"/>
    <property type="evidence" value="ECO:0007669"/>
    <property type="project" value="InterPro"/>
</dbReference>
<dbReference type="GO" id="GO:0030435">
    <property type="term" value="P:sporulation resulting in formation of a cellular spore"/>
    <property type="evidence" value="ECO:0007669"/>
    <property type="project" value="UniProtKB-KW"/>
</dbReference>
<dbReference type="FunFam" id="3.40.47.40:FF:000001">
    <property type="entry name" value="Stage V sporulation protein AD"/>
    <property type="match status" value="1"/>
</dbReference>
<dbReference type="Gene3D" id="3.40.47.40">
    <property type="entry name" value="Stage V sporulation protein AD"/>
    <property type="match status" value="1"/>
</dbReference>
<dbReference type="InterPro" id="IPR010894">
    <property type="entry name" value="SpoVAD"/>
</dbReference>
<dbReference type="InterPro" id="IPR038369">
    <property type="entry name" value="SpoVAD_sf"/>
</dbReference>
<dbReference type="InterPro" id="IPR016039">
    <property type="entry name" value="Thiolase-like"/>
</dbReference>
<dbReference type="NCBIfam" id="NF006160">
    <property type="entry name" value="PRK08304.1"/>
    <property type="match status" value="1"/>
</dbReference>
<dbReference type="NCBIfam" id="NF009069">
    <property type="entry name" value="PRK12404.1"/>
    <property type="match status" value="1"/>
</dbReference>
<dbReference type="NCBIfam" id="TIGR02845">
    <property type="entry name" value="spore_V_AD"/>
    <property type="match status" value="1"/>
</dbReference>
<dbReference type="Pfam" id="PF07451">
    <property type="entry name" value="SpoVAD"/>
    <property type="match status" value="1"/>
</dbReference>
<dbReference type="PIRSF" id="PIRSF011570">
    <property type="entry name" value="SpoVAD"/>
    <property type="match status" value="1"/>
</dbReference>
<dbReference type="SUPFAM" id="SSF53901">
    <property type="entry name" value="Thiolase-like"/>
    <property type="match status" value="1"/>
</dbReference>
<protein>
    <recommendedName>
        <fullName>Stage V sporulation protein AD</fullName>
    </recommendedName>
</protein>
<proteinExistence type="evidence at protein level"/>
<sequence>MKLTGKQTWVFEHPIFVNSAGTAAGPKEKDGPLGSLFDKTYDEMHCNQKSWEMAERQLMEDAVNVALQKNNLTKDDIDLLLAGDLLNQNVTANYVARHLKIPFLCMFGACSTSMETVAVASALVDGGFAKRALAATSSHNATAERQFRYPTEYGGQKPDTATSTVTGSGAVVISQTPGDIQITSATVGKVSDLGITDPFDMGSAMAPAAADTIKQHFKDLNRTADDYDLILTGDLSGVGSPIVKDILKEDGYPVGTKHDDCGLLIYTPDQQVFAGGSGCACSAVVTYSHIFKQLREGKLNRVFVVATGALLSPTMIQQKETIPTIAHGVVFERAGGAS</sequence>
<accession>P40869</accession>
<gene>
    <name type="primary">spoVAD</name>
    <name type="ordered locus">BSU23410</name>
</gene>
<feature type="chain" id="PRO_0000072081" description="Stage V sporulation protein AD">
    <location>
        <begin position="1"/>
        <end position="338"/>
    </location>
</feature>
<feature type="turn" evidence="1">
    <location>
        <begin position="5"/>
        <end position="7"/>
    </location>
</feature>
<feature type="strand" evidence="1">
    <location>
        <begin position="8"/>
        <end position="24"/>
    </location>
</feature>
<feature type="helix" evidence="1">
    <location>
        <begin position="26"/>
        <end position="29"/>
    </location>
</feature>
<feature type="helix" evidence="1">
    <location>
        <begin position="34"/>
        <end position="36"/>
    </location>
</feature>
<feature type="strand" evidence="1">
    <location>
        <begin position="38"/>
        <end position="40"/>
    </location>
</feature>
<feature type="turn" evidence="1">
    <location>
        <begin position="44"/>
        <end position="47"/>
    </location>
</feature>
<feature type="helix" evidence="1">
    <location>
        <begin position="51"/>
        <end position="69"/>
    </location>
</feature>
<feature type="helix" evidence="1">
    <location>
        <begin position="74"/>
        <end position="76"/>
    </location>
</feature>
<feature type="strand" evidence="1">
    <location>
        <begin position="78"/>
        <end position="86"/>
    </location>
</feature>
<feature type="helix" evidence="1">
    <location>
        <begin position="87"/>
        <end position="89"/>
    </location>
</feature>
<feature type="helix" evidence="1">
    <location>
        <begin position="90"/>
        <end position="99"/>
    </location>
</feature>
<feature type="strand" evidence="1">
    <location>
        <begin position="103"/>
        <end position="106"/>
    </location>
</feature>
<feature type="helix" evidence="1">
    <location>
        <begin position="109"/>
        <end position="111"/>
    </location>
</feature>
<feature type="helix" evidence="1">
    <location>
        <begin position="112"/>
        <end position="125"/>
    </location>
</feature>
<feature type="strand" evidence="1">
    <location>
        <begin position="130"/>
        <end position="138"/>
    </location>
</feature>
<feature type="helix" evidence="1">
    <location>
        <begin position="142"/>
        <end position="146"/>
    </location>
</feature>
<feature type="helix" evidence="1">
    <location>
        <begin position="151"/>
        <end position="153"/>
    </location>
</feature>
<feature type="strand" evidence="1">
    <location>
        <begin position="167"/>
        <end position="176"/>
    </location>
</feature>
<feature type="strand" evidence="1">
    <location>
        <begin position="179"/>
        <end position="186"/>
    </location>
</feature>
<feature type="helix" evidence="1">
    <location>
        <begin position="201"/>
        <end position="219"/>
    </location>
</feature>
<feature type="helix" evidence="1">
    <location>
        <begin position="224"/>
        <end position="226"/>
    </location>
</feature>
<feature type="strand" evidence="1">
    <location>
        <begin position="228"/>
        <end position="234"/>
    </location>
</feature>
<feature type="helix" evidence="1">
    <location>
        <begin position="236"/>
        <end position="249"/>
    </location>
</feature>
<feature type="helix" evidence="1">
    <location>
        <begin position="255"/>
        <end position="257"/>
    </location>
</feature>
<feature type="strand" evidence="1">
    <location>
        <begin position="258"/>
        <end position="260"/>
    </location>
</feature>
<feature type="helix" evidence="1">
    <location>
        <begin position="261"/>
        <end position="264"/>
    </location>
</feature>
<feature type="strand" evidence="1">
    <location>
        <begin position="276"/>
        <end position="278"/>
    </location>
</feature>
<feature type="helix" evidence="1">
    <location>
        <begin position="279"/>
        <end position="295"/>
    </location>
</feature>
<feature type="strand" evidence="1">
    <location>
        <begin position="300"/>
        <end position="309"/>
    </location>
</feature>
<feature type="helix" evidence="1">
    <location>
        <begin position="313"/>
        <end position="316"/>
    </location>
</feature>
<feature type="turn" evidence="1">
    <location>
        <begin position="317"/>
        <end position="319"/>
    </location>
</feature>
<feature type="strand" evidence="1">
    <location>
        <begin position="324"/>
        <end position="333"/>
    </location>
</feature>